<organism>
    <name type="scientific">Shigella boydii serotype 18 (strain CDC 3083-94 / BS512)</name>
    <dbReference type="NCBI Taxonomy" id="344609"/>
    <lineage>
        <taxon>Bacteria</taxon>
        <taxon>Pseudomonadati</taxon>
        <taxon>Pseudomonadota</taxon>
        <taxon>Gammaproteobacteria</taxon>
        <taxon>Enterobacterales</taxon>
        <taxon>Enterobacteriaceae</taxon>
        <taxon>Shigella</taxon>
    </lineage>
</organism>
<evidence type="ECO:0000255" key="1">
    <source>
        <dbReference type="HAMAP-Rule" id="MF_00252"/>
    </source>
</evidence>
<name>SYK_SHIB3</name>
<keyword id="KW-0007">Acetylation</keyword>
<keyword id="KW-0030">Aminoacyl-tRNA synthetase</keyword>
<keyword id="KW-0067">ATP-binding</keyword>
<keyword id="KW-0963">Cytoplasm</keyword>
<keyword id="KW-0436">Ligase</keyword>
<keyword id="KW-0460">Magnesium</keyword>
<keyword id="KW-0479">Metal-binding</keyword>
<keyword id="KW-0547">Nucleotide-binding</keyword>
<keyword id="KW-0648">Protein biosynthesis</keyword>
<keyword id="KW-1185">Reference proteome</keyword>
<comment type="catalytic activity">
    <reaction evidence="1">
        <text>tRNA(Lys) + L-lysine + ATP = L-lysyl-tRNA(Lys) + AMP + diphosphate</text>
        <dbReference type="Rhea" id="RHEA:20792"/>
        <dbReference type="Rhea" id="RHEA-COMP:9696"/>
        <dbReference type="Rhea" id="RHEA-COMP:9697"/>
        <dbReference type="ChEBI" id="CHEBI:30616"/>
        <dbReference type="ChEBI" id="CHEBI:32551"/>
        <dbReference type="ChEBI" id="CHEBI:33019"/>
        <dbReference type="ChEBI" id="CHEBI:78442"/>
        <dbReference type="ChEBI" id="CHEBI:78529"/>
        <dbReference type="ChEBI" id="CHEBI:456215"/>
        <dbReference type="EC" id="6.1.1.6"/>
    </reaction>
</comment>
<comment type="cofactor">
    <cofactor evidence="1">
        <name>Mg(2+)</name>
        <dbReference type="ChEBI" id="CHEBI:18420"/>
    </cofactor>
    <text evidence="1">Binds 3 Mg(2+) ions per subunit.</text>
</comment>
<comment type="subunit">
    <text evidence="1">Homodimer.</text>
</comment>
<comment type="subcellular location">
    <subcellularLocation>
        <location evidence="1">Cytoplasm</location>
    </subcellularLocation>
</comment>
<comment type="similarity">
    <text evidence="1">Belongs to the class-II aminoacyl-tRNA synthetase family.</text>
</comment>
<proteinExistence type="inferred from homology"/>
<accession>B2U0Q7</accession>
<sequence length="505" mass="57617">MSEQHAQGADAVVDLNNELKTRREKLANLREQGIAFPNDFRRDHTSDQLHAEFDGKENEELEALNIEVAVAGRMMTRRIMGKASFVTLQDVGGRIQLYVARDDLPEGVYNEQFKKWDLGDILGAKGKLFKTKTGELSIHCTELRLLTKALRPLPDKFHGLQDQEARYRQRYLDLISNDESRNTFKVRSQILSGIRQFMVNRGFMEVETPMMQVIPGGAAARPFITHHNALDLDMYLRIAPELYLKRLVVGGFERVFEINRNFRNEGISVRHNPEFTMMELYMAYADYKDLIELTESLFRTLAQDILGKTEVTYGDVTLDFGKPFEKLTMREAIKKYRPETDMADLDNFDSAKAIAESIGIHVEKSWGLGRIVTEIFEEVAEAHLIQPTFITEYPAEVSPLARRNDINPEITDRFEFFIGGREIGNGFSELNDAEDQAQRFLDQVAAKDAGDDEAMFYDEDYVTALEHGLPPTAGLGIGIDRMVMLFTNSHTIRDVILFPAMRPVK</sequence>
<dbReference type="EC" id="6.1.1.6" evidence="1"/>
<dbReference type="EMBL" id="CP001063">
    <property type="protein sequence ID" value="ACD07165.1"/>
    <property type="molecule type" value="Genomic_DNA"/>
</dbReference>
<dbReference type="RefSeq" id="WP_000003068.1">
    <property type="nucleotide sequence ID" value="NC_010658.1"/>
</dbReference>
<dbReference type="BMRB" id="B2U0Q7"/>
<dbReference type="SMR" id="B2U0Q7"/>
<dbReference type="STRING" id="344609.SbBS512_E3309"/>
<dbReference type="GeneID" id="93779112"/>
<dbReference type="KEGG" id="sbc:SbBS512_E3309"/>
<dbReference type="HOGENOM" id="CLU_008255_6_0_6"/>
<dbReference type="Proteomes" id="UP000001030">
    <property type="component" value="Chromosome"/>
</dbReference>
<dbReference type="GO" id="GO:0005829">
    <property type="term" value="C:cytosol"/>
    <property type="evidence" value="ECO:0007669"/>
    <property type="project" value="TreeGrafter"/>
</dbReference>
<dbReference type="GO" id="GO:0005524">
    <property type="term" value="F:ATP binding"/>
    <property type="evidence" value="ECO:0007669"/>
    <property type="project" value="UniProtKB-UniRule"/>
</dbReference>
<dbReference type="GO" id="GO:0004824">
    <property type="term" value="F:lysine-tRNA ligase activity"/>
    <property type="evidence" value="ECO:0007669"/>
    <property type="project" value="UniProtKB-UniRule"/>
</dbReference>
<dbReference type="GO" id="GO:0000287">
    <property type="term" value="F:magnesium ion binding"/>
    <property type="evidence" value="ECO:0007669"/>
    <property type="project" value="UniProtKB-UniRule"/>
</dbReference>
<dbReference type="GO" id="GO:0000049">
    <property type="term" value="F:tRNA binding"/>
    <property type="evidence" value="ECO:0007669"/>
    <property type="project" value="TreeGrafter"/>
</dbReference>
<dbReference type="GO" id="GO:0006430">
    <property type="term" value="P:lysyl-tRNA aminoacylation"/>
    <property type="evidence" value="ECO:0007669"/>
    <property type="project" value="UniProtKB-UniRule"/>
</dbReference>
<dbReference type="CDD" id="cd00775">
    <property type="entry name" value="LysRS_core"/>
    <property type="match status" value="1"/>
</dbReference>
<dbReference type="CDD" id="cd04322">
    <property type="entry name" value="LysRS_N"/>
    <property type="match status" value="1"/>
</dbReference>
<dbReference type="FunFam" id="2.40.50.140:FF:000024">
    <property type="entry name" value="Lysine--tRNA ligase"/>
    <property type="match status" value="1"/>
</dbReference>
<dbReference type="FunFam" id="3.30.930.10:FF:000001">
    <property type="entry name" value="Lysine--tRNA ligase"/>
    <property type="match status" value="1"/>
</dbReference>
<dbReference type="Gene3D" id="3.30.930.10">
    <property type="entry name" value="Bira Bifunctional Protein, Domain 2"/>
    <property type="match status" value="1"/>
</dbReference>
<dbReference type="Gene3D" id="2.40.50.140">
    <property type="entry name" value="Nucleic acid-binding proteins"/>
    <property type="match status" value="1"/>
</dbReference>
<dbReference type="HAMAP" id="MF_00252">
    <property type="entry name" value="Lys_tRNA_synth_class2"/>
    <property type="match status" value="1"/>
</dbReference>
<dbReference type="InterPro" id="IPR004364">
    <property type="entry name" value="Aa-tRNA-synt_II"/>
</dbReference>
<dbReference type="InterPro" id="IPR006195">
    <property type="entry name" value="aa-tRNA-synth_II"/>
</dbReference>
<dbReference type="InterPro" id="IPR045864">
    <property type="entry name" value="aa-tRNA-synth_II/BPL/LPL"/>
</dbReference>
<dbReference type="InterPro" id="IPR002313">
    <property type="entry name" value="Lys-tRNA-ligase_II"/>
</dbReference>
<dbReference type="InterPro" id="IPR034762">
    <property type="entry name" value="Lys-tRNA-ligase_II_bac/euk"/>
</dbReference>
<dbReference type="InterPro" id="IPR044136">
    <property type="entry name" value="Lys-tRNA-ligase_II_N"/>
</dbReference>
<dbReference type="InterPro" id="IPR018149">
    <property type="entry name" value="Lys-tRNA-synth_II_C"/>
</dbReference>
<dbReference type="InterPro" id="IPR012340">
    <property type="entry name" value="NA-bd_OB-fold"/>
</dbReference>
<dbReference type="InterPro" id="IPR004365">
    <property type="entry name" value="NA-bd_OB_tRNA"/>
</dbReference>
<dbReference type="NCBIfam" id="TIGR00499">
    <property type="entry name" value="lysS_bact"/>
    <property type="match status" value="1"/>
</dbReference>
<dbReference type="NCBIfam" id="NF001756">
    <property type="entry name" value="PRK00484.1"/>
    <property type="match status" value="1"/>
</dbReference>
<dbReference type="NCBIfam" id="NF009101">
    <property type="entry name" value="PRK12445.1"/>
    <property type="match status" value="1"/>
</dbReference>
<dbReference type="PANTHER" id="PTHR42918:SF15">
    <property type="entry name" value="LYSINE--TRNA LIGASE, CHLOROPLASTIC_MITOCHONDRIAL"/>
    <property type="match status" value="1"/>
</dbReference>
<dbReference type="PANTHER" id="PTHR42918">
    <property type="entry name" value="LYSYL-TRNA SYNTHETASE"/>
    <property type="match status" value="1"/>
</dbReference>
<dbReference type="Pfam" id="PF00152">
    <property type="entry name" value="tRNA-synt_2"/>
    <property type="match status" value="1"/>
</dbReference>
<dbReference type="Pfam" id="PF01336">
    <property type="entry name" value="tRNA_anti-codon"/>
    <property type="match status" value="1"/>
</dbReference>
<dbReference type="PIRSF" id="PIRSF039101">
    <property type="entry name" value="LysRS2"/>
    <property type="match status" value="1"/>
</dbReference>
<dbReference type="PRINTS" id="PR00982">
    <property type="entry name" value="TRNASYNTHLYS"/>
</dbReference>
<dbReference type="SUPFAM" id="SSF55681">
    <property type="entry name" value="Class II aaRS and biotin synthetases"/>
    <property type="match status" value="1"/>
</dbReference>
<dbReference type="SUPFAM" id="SSF50249">
    <property type="entry name" value="Nucleic acid-binding proteins"/>
    <property type="match status" value="1"/>
</dbReference>
<dbReference type="PROSITE" id="PS50862">
    <property type="entry name" value="AA_TRNA_LIGASE_II"/>
    <property type="match status" value="1"/>
</dbReference>
<feature type="chain" id="PRO_1000101149" description="Lysine--tRNA ligase">
    <location>
        <begin position="1"/>
        <end position="505"/>
    </location>
</feature>
<feature type="binding site" evidence="1">
    <location>
        <position position="415"/>
    </location>
    <ligand>
        <name>Mg(2+)</name>
        <dbReference type="ChEBI" id="CHEBI:18420"/>
        <label>1</label>
    </ligand>
</feature>
<feature type="binding site" evidence="1">
    <location>
        <position position="422"/>
    </location>
    <ligand>
        <name>Mg(2+)</name>
        <dbReference type="ChEBI" id="CHEBI:18420"/>
        <label>1</label>
    </ligand>
</feature>
<feature type="binding site" evidence="1">
    <location>
        <position position="422"/>
    </location>
    <ligand>
        <name>Mg(2+)</name>
        <dbReference type="ChEBI" id="CHEBI:18420"/>
        <label>2</label>
    </ligand>
</feature>
<feature type="modified residue" description="N6-acetyllysine" evidence="1">
    <location>
        <position position="114"/>
    </location>
</feature>
<feature type="modified residue" description="N6-acetyllysine" evidence="1">
    <location>
        <position position="156"/>
    </location>
</feature>
<reference key="1">
    <citation type="submission" date="2008-05" db="EMBL/GenBank/DDBJ databases">
        <title>Complete sequence of Shigella boydii serotype 18 strain BS512.</title>
        <authorList>
            <person name="Rasko D.A."/>
            <person name="Rosovitz M."/>
            <person name="Maurelli A.T."/>
            <person name="Myers G."/>
            <person name="Seshadri R."/>
            <person name="Cer R."/>
            <person name="Jiang L."/>
            <person name="Ravel J."/>
            <person name="Sebastian Y."/>
        </authorList>
    </citation>
    <scope>NUCLEOTIDE SEQUENCE [LARGE SCALE GENOMIC DNA]</scope>
    <source>
        <strain>CDC 3083-94 / BS512</strain>
    </source>
</reference>
<protein>
    <recommendedName>
        <fullName evidence="1">Lysine--tRNA ligase</fullName>
        <ecNumber evidence="1">6.1.1.6</ecNumber>
    </recommendedName>
    <alternativeName>
        <fullName evidence="1">Lysyl-tRNA synthetase</fullName>
        <shortName evidence="1">LysRS</shortName>
    </alternativeName>
</protein>
<gene>
    <name evidence="1" type="primary">lysS</name>
    <name type="ordered locus">SbBS512_E3309</name>
</gene>